<gene>
    <name evidence="1" type="primary">ruvB</name>
    <name type="ordered locus">Geob_2323</name>
</gene>
<proteinExistence type="inferred from homology"/>
<evidence type="ECO:0000255" key="1">
    <source>
        <dbReference type="HAMAP-Rule" id="MF_00016"/>
    </source>
</evidence>
<dbReference type="EC" id="3.6.4.-" evidence="1"/>
<dbReference type="EMBL" id="CP001390">
    <property type="protein sequence ID" value="ACM20677.1"/>
    <property type="molecule type" value="Genomic_DNA"/>
</dbReference>
<dbReference type="RefSeq" id="WP_012647406.1">
    <property type="nucleotide sequence ID" value="NC_011979.1"/>
</dbReference>
<dbReference type="SMR" id="B9LZC4"/>
<dbReference type="STRING" id="316067.Geob_2323"/>
<dbReference type="KEGG" id="geo:Geob_2323"/>
<dbReference type="eggNOG" id="COG2255">
    <property type="taxonomic scope" value="Bacteria"/>
</dbReference>
<dbReference type="HOGENOM" id="CLU_055599_1_0_7"/>
<dbReference type="OrthoDB" id="9804478at2"/>
<dbReference type="Proteomes" id="UP000007721">
    <property type="component" value="Chromosome"/>
</dbReference>
<dbReference type="GO" id="GO:0005737">
    <property type="term" value="C:cytoplasm"/>
    <property type="evidence" value="ECO:0007669"/>
    <property type="project" value="UniProtKB-SubCell"/>
</dbReference>
<dbReference type="GO" id="GO:0048476">
    <property type="term" value="C:Holliday junction resolvase complex"/>
    <property type="evidence" value="ECO:0007669"/>
    <property type="project" value="UniProtKB-UniRule"/>
</dbReference>
<dbReference type="GO" id="GO:0005524">
    <property type="term" value="F:ATP binding"/>
    <property type="evidence" value="ECO:0007669"/>
    <property type="project" value="UniProtKB-UniRule"/>
</dbReference>
<dbReference type="GO" id="GO:0016887">
    <property type="term" value="F:ATP hydrolysis activity"/>
    <property type="evidence" value="ECO:0007669"/>
    <property type="project" value="InterPro"/>
</dbReference>
<dbReference type="GO" id="GO:0000400">
    <property type="term" value="F:four-way junction DNA binding"/>
    <property type="evidence" value="ECO:0007669"/>
    <property type="project" value="UniProtKB-UniRule"/>
</dbReference>
<dbReference type="GO" id="GO:0009378">
    <property type="term" value="F:four-way junction helicase activity"/>
    <property type="evidence" value="ECO:0007669"/>
    <property type="project" value="InterPro"/>
</dbReference>
<dbReference type="GO" id="GO:0006310">
    <property type="term" value="P:DNA recombination"/>
    <property type="evidence" value="ECO:0007669"/>
    <property type="project" value="UniProtKB-UniRule"/>
</dbReference>
<dbReference type="GO" id="GO:0006281">
    <property type="term" value="P:DNA repair"/>
    <property type="evidence" value="ECO:0007669"/>
    <property type="project" value="UniProtKB-UniRule"/>
</dbReference>
<dbReference type="CDD" id="cd00009">
    <property type="entry name" value="AAA"/>
    <property type="match status" value="1"/>
</dbReference>
<dbReference type="FunFam" id="3.40.50.300:FF:000073">
    <property type="entry name" value="Holliday junction ATP-dependent DNA helicase RuvB"/>
    <property type="match status" value="1"/>
</dbReference>
<dbReference type="Gene3D" id="1.10.8.60">
    <property type="match status" value="1"/>
</dbReference>
<dbReference type="Gene3D" id="3.40.50.300">
    <property type="entry name" value="P-loop containing nucleotide triphosphate hydrolases"/>
    <property type="match status" value="1"/>
</dbReference>
<dbReference type="Gene3D" id="1.10.10.10">
    <property type="entry name" value="Winged helix-like DNA-binding domain superfamily/Winged helix DNA-binding domain"/>
    <property type="match status" value="1"/>
</dbReference>
<dbReference type="HAMAP" id="MF_00016">
    <property type="entry name" value="DNA_HJ_migration_RuvB"/>
    <property type="match status" value="1"/>
</dbReference>
<dbReference type="InterPro" id="IPR003593">
    <property type="entry name" value="AAA+_ATPase"/>
</dbReference>
<dbReference type="InterPro" id="IPR041445">
    <property type="entry name" value="AAA_lid_4"/>
</dbReference>
<dbReference type="InterPro" id="IPR004605">
    <property type="entry name" value="DNA_helicase_Holl-junc_RuvB"/>
</dbReference>
<dbReference type="InterPro" id="IPR027417">
    <property type="entry name" value="P-loop_NTPase"/>
</dbReference>
<dbReference type="InterPro" id="IPR008824">
    <property type="entry name" value="RuvB-like_N"/>
</dbReference>
<dbReference type="InterPro" id="IPR008823">
    <property type="entry name" value="RuvB_C"/>
</dbReference>
<dbReference type="InterPro" id="IPR036388">
    <property type="entry name" value="WH-like_DNA-bd_sf"/>
</dbReference>
<dbReference type="InterPro" id="IPR036390">
    <property type="entry name" value="WH_DNA-bd_sf"/>
</dbReference>
<dbReference type="NCBIfam" id="NF000868">
    <property type="entry name" value="PRK00080.1"/>
    <property type="match status" value="1"/>
</dbReference>
<dbReference type="NCBIfam" id="TIGR00635">
    <property type="entry name" value="ruvB"/>
    <property type="match status" value="1"/>
</dbReference>
<dbReference type="PANTHER" id="PTHR42848">
    <property type="match status" value="1"/>
</dbReference>
<dbReference type="PANTHER" id="PTHR42848:SF1">
    <property type="entry name" value="HOLLIDAY JUNCTION BRANCH MIGRATION COMPLEX SUBUNIT RUVB"/>
    <property type="match status" value="1"/>
</dbReference>
<dbReference type="Pfam" id="PF17864">
    <property type="entry name" value="AAA_lid_4"/>
    <property type="match status" value="1"/>
</dbReference>
<dbReference type="Pfam" id="PF05491">
    <property type="entry name" value="RuvB_C"/>
    <property type="match status" value="1"/>
</dbReference>
<dbReference type="Pfam" id="PF05496">
    <property type="entry name" value="RuvB_N"/>
    <property type="match status" value="1"/>
</dbReference>
<dbReference type="SMART" id="SM00382">
    <property type="entry name" value="AAA"/>
    <property type="match status" value="1"/>
</dbReference>
<dbReference type="SUPFAM" id="SSF52540">
    <property type="entry name" value="P-loop containing nucleoside triphosphate hydrolases"/>
    <property type="match status" value="1"/>
</dbReference>
<dbReference type="SUPFAM" id="SSF46785">
    <property type="entry name" value="Winged helix' DNA-binding domain"/>
    <property type="match status" value="1"/>
</dbReference>
<comment type="function">
    <text evidence="1">The RuvA-RuvB-RuvC complex processes Holliday junction (HJ) DNA during genetic recombination and DNA repair, while the RuvA-RuvB complex plays an important role in the rescue of blocked DNA replication forks via replication fork reversal (RFR). RuvA specifically binds to HJ cruciform DNA, conferring on it an open structure. The RuvB hexamer acts as an ATP-dependent pump, pulling dsDNA into and through the RuvAB complex. RuvB forms 2 homohexamers on either side of HJ DNA bound by 1 or 2 RuvA tetramers; 4 subunits per hexamer contact DNA at a time. Coordinated motions by a converter formed by DNA-disengaged RuvB subunits stimulates ATP hydrolysis and nucleotide exchange. Immobilization of the converter enables RuvB to convert the ATP-contained energy into a lever motion, pulling 2 nucleotides of DNA out of the RuvA tetramer per ATP hydrolyzed, thus driving DNA branch migration. The RuvB motors rotate together with the DNA substrate, which together with the progressing nucleotide cycle form the mechanistic basis for DNA recombination by continuous HJ branch migration. Branch migration allows RuvC to scan DNA until it finds its consensus sequence, where it cleaves and resolves cruciform DNA.</text>
</comment>
<comment type="catalytic activity">
    <reaction evidence="1">
        <text>ATP + H2O = ADP + phosphate + H(+)</text>
        <dbReference type="Rhea" id="RHEA:13065"/>
        <dbReference type="ChEBI" id="CHEBI:15377"/>
        <dbReference type="ChEBI" id="CHEBI:15378"/>
        <dbReference type="ChEBI" id="CHEBI:30616"/>
        <dbReference type="ChEBI" id="CHEBI:43474"/>
        <dbReference type="ChEBI" id="CHEBI:456216"/>
    </reaction>
</comment>
<comment type="subunit">
    <text evidence="1">Homohexamer. Forms an RuvA(8)-RuvB(12)-Holliday junction (HJ) complex. HJ DNA is sandwiched between 2 RuvA tetramers; dsDNA enters through RuvA and exits via RuvB. An RuvB hexamer assembles on each DNA strand where it exits the tetramer. Each RuvB hexamer is contacted by two RuvA subunits (via domain III) on 2 adjacent RuvB subunits; this complex drives branch migration. In the full resolvosome a probable DNA-RuvA(4)-RuvB(12)-RuvC(2) complex forms which resolves the HJ.</text>
</comment>
<comment type="subcellular location">
    <subcellularLocation>
        <location evidence="1">Cytoplasm</location>
    </subcellularLocation>
</comment>
<comment type="domain">
    <text evidence="1">Has 3 domains, the large (RuvB-L) and small ATPase (RuvB-S) domains and the C-terminal head (RuvB-H) domain. The head domain binds DNA, while the ATPase domains jointly bind ATP, ADP or are empty depending on the state of the subunit in the translocation cycle. During a single DNA translocation step the structure of each domain remains the same, but their relative positions change.</text>
</comment>
<comment type="similarity">
    <text evidence="1">Belongs to the RuvB family.</text>
</comment>
<organism>
    <name type="scientific">Geotalea daltonii (strain DSM 22248 / JCM 15807 / FRC-32)</name>
    <name type="common">Geobacter daltonii</name>
    <dbReference type="NCBI Taxonomy" id="316067"/>
    <lineage>
        <taxon>Bacteria</taxon>
        <taxon>Pseudomonadati</taxon>
        <taxon>Thermodesulfobacteriota</taxon>
        <taxon>Desulfuromonadia</taxon>
        <taxon>Geobacterales</taxon>
        <taxon>Geobacteraceae</taxon>
        <taxon>Geotalea</taxon>
    </lineage>
</organism>
<reference key="1">
    <citation type="submission" date="2009-01" db="EMBL/GenBank/DDBJ databases">
        <title>Complete sequence of Geobacter sp. FRC-32.</title>
        <authorList>
            <consortium name="US DOE Joint Genome Institute"/>
            <person name="Lucas S."/>
            <person name="Copeland A."/>
            <person name="Lapidus A."/>
            <person name="Glavina del Rio T."/>
            <person name="Dalin E."/>
            <person name="Tice H."/>
            <person name="Bruce D."/>
            <person name="Goodwin L."/>
            <person name="Pitluck S."/>
            <person name="Saunders E."/>
            <person name="Brettin T."/>
            <person name="Detter J.C."/>
            <person name="Han C."/>
            <person name="Larimer F."/>
            <person name="Land M."/>
            <person name="Hauser L."/>
            <person name="Kyrpides N."/>
            <person name="Ovchinnikova G."/>
            <person name="Kostka J."/>
            <person name="Richardson P."/>
        </authorList>
    </citation>
    <scope>NUCLEOTIDE SEQUENCE [LARGE SCALE GENOMIC DNA]</scope>
    <source>
        <strain>DSM 22248 / JCM 15807 / FRC-32</strain>
    </source>
</reference>
<protein>
    <recommendedName>
        <fullName evidence="1">Holliday junction branch migration complex subunit RuvB</fullName>
        <ecNumber evidence="1">3.6.4.-</ecNumber>
    </recommendedName>
</protein>
<feature type="chain" id="PRO_1000116644" description="Holliday junction branch migration complex subunit RuvB">
    <location>
        <begin position="1"/>
        <end position="339"/>
    </location>
</feature>
<feature type="region of interest" description="Large ATPase domain (RuvB-L)" evidence="1">
    <location>
        <begin position="1"/>
        <end position="180"/>
    </location>
</feature>
<feature type="region of interest" description="Small ATPAse domain (RuvB-S)" evidence="1">
    <location>
        <begin position="181"/>
        <end position="251"/>
    </location>
</feature>
<feature type="region of interest" description="Head domain (RuvB-H)" evidence="1">
    <location>
        <begin position="254"/>
        <end position="339"/>
    </location>
</feature>
<feature type="binding site" evidence="1">
    <location>
        <position position="19"/>
    </location>
    <ligand>
        <name>ATP</name>
        <dbReference type="ChEBI" id="CHEBI:30616"/>
    </ligand>
</feature>
<feature type="binding site" evidence="1">
    <location>
        <position position="20"/>
    </location>
    <ligand>
        <name>ATP</name>
        <dbReference type="ChEBI" id="CHEBI:30616"/>
    </ligand>
</feature>
<feature type="binding site" evidence="1">
    <location>
        <position position="61"/>
    </location>
    <ligand>
        <name>ATP</name>
        <dbReference type="ChEBI" id="CHEBI:30616"/>
    </ligand>
</feature>
<feature type="binding site" evidence="1">
    <location>
        <position position="64"/>
    </location>
    <ligand>
        <name>ATP</name>
        <dbReference type="ChEBI" id="CHEBI:30616"/>
    </ligand>
</feature>
<feature type="binding site" evidence="1">
    <location>
        <position position="65"/>
    </location>
    <ligand>
        <name>ATP</name>
        <dbReference type="ChEBI" id="CHEBI:30616"/>
    </ligand>
</feature>
<feature type="binding site" evidence="1">
    <location>
        <position position="65"/>
    </location>
    <ligand>
        <name>Mg(2+)</name>
        <dbReference type="ChEBI" id="CHEBI:18420"/>
    </ligand>
</feature>
<feature type="binding site" evidence="1">
    <location>
        <position position="66"/>
    </location>
    <ligand>
        <name>ATP</name>
        <dbReference type="ChEBI" id="CHEBI:30616"/>
    </ligand>
</feature>
<feature type="binding site" evidence="1">
    <location>
        <begin position="127"/>
        <end position="129"/>
    </location>
    <ligand>
        <name>ATP</name>
        <dbReference type="ChEBI" id="CHEBI:30616"/>
    </ligand>
</feature>
<feature type="binding site" evidence="1">
    <location>
        <position position="170"/>
    </location>
    <ligand>
        <name>ATP</name>
        <dbReference type="ChEBI" id="CHEBI:30616"/>
    </ligand>
</feature>
<feature type="binding site" evidence="1">
    <location>
        <position position="180"/>
    </location>
    <ligand>
        <name>ATP</name>
        <dbReference type="ChEBI" id="CHEBI:30616"/>
    </ligand>
</feature>
<feature type="binding site" evidence="1">
    <location>
        <position position="217"/>
    </location>
    <ligand>
        <name>ATP</name>
        <dbReference type="ChEBI" id="CHEBI:30616"/>
    </ligand>
</feature>
<feature type="binding site" evidence="1">
    <location>
        <position position="309"/>
    </location>
    <ligand>
        <name>DNA</name>
        <dbReference type="ChEBI" id="CHEBI:16991"/>
    </ligand>
</feature>
<feature type="binding site" evidence="1">
    <location>
        <position position="314"/>
    </location>
    <ligand>
        <name>DNA</name>
        <dbReference type="ChEBI" id="CHEBI:16991"/>
    </ligand>
</feature>
<name>RUVB_GEODF</name>
<accession>B9LZC4</accession>
<keyword id="KW-0067">ATP-binding</keyword>
<keyword id="KW-0963">Cytoplasm</keyword>
<keyword id="KW-0227">DNA damage</keyword>
<keyword id="KW-0233">DNA recombination</keyword>
<keyword id="KW-0234">DNA repair</keyword>
<keyword id="KW-0238">DNA-binding</keyword>
<keyword id="KW-0378">Hydrolase</keyword>
<keyword id="KW-0547">Nucleotide-binding</keyword>
<keyword id="KW-1185">Reference proteome</keyword>
<sequence length="339" mass="37505">MTRTITPDMTDDDLLEATLRPKSLDDYVGQEKAKGNLRVFIEAARGRGEALDHVLLYGPPGLGKTTLANIIACEMGVNIKSTSGPVIERPGDLAAILTNLETHDVLFIDEIHRLSHVVEEILYPAMEDFQLDIIIGQGPSARTIKLDLPKFTLVGATTRAGLLSSPLRDRFGVISRLEFYTIEELAFIITRSARILGMEIKPEGATELARRSRGTPRIANRLLRRVRDFAQVKADGVITLNVVQDALALLEIDHMGFDYMDRMILLTIIDKFGGGPVGLDTIAAAISEESDTIEDVYEPFLIQNGFLNRTPRGRVATRAAYEHFGRIVPEPPQGKLFQD</sequence>